<organism>
    <name type="scientific">Bradyrhizobium diazoefficiens (strain JCM 10833 / BCRC 13528 / IAM 13628 / NBRC 14792 / USDA 110)</name>
    <dbReference type="NCBI Taxonomy" id="224911"/>
    <lineage>
        <taxon>Bacteria</taxon>
        <taxon>Pseudomonadati</taxon>
        <taxon>Pseudomonadota</taxon>
        <taxon>Alphaproteobacteria</taxon>
        <taxon>Hyphomicrobiales</taxon>
        <taxon>Nitrobacteraceae</taxon>
        <taxon>Bradyrhizobium</taxon>
    </lineage>
</organism>
<reference key="1">
    <citation type="journal article" date="2002" name="DNA Res.">
        <title>Complete genomic sequence of nitrogen-fixing symbiotic bacterium Bradyrhizobium japonicum USDA110.</title>
        <authorList>
            <person name="Kaneko T."/>
            <person name="Nakamura Y."/>
            <person name="Sato S."/>
            <person name="Minamisawa K."/>
            <person name="Uchiumi T."/>
            <person name="Sasamoto S."/>
            <person name="Watanabe A."/>
            <person name="Idesawa K."/>
            <person name="Iriguchi M."/>
            <person name="Kawashima K."/>
            <person name="Kohara M."/>
            <person name="Matsumoto M."/>
            <person name="Shimpo S."/>
            <person name="Tsuruoka H."/>
            <person name="Wada T."/>
            <person name="Yamada M."/>
            <person name="Tabata S."/>
        </authorList>
    </citation>
    <scope>NUCLEOTIDE SEQUENCE [LARGE SCALE GENOMIC DNA]</scope>
    <source>
        <strain>JCM 10833 / BCRC 13528 / IAM 13628 / NBRC 14792 / USDA 110</strain>
    </source>
</reference>
<comment type="function">
    <text evidence="1">Catalyzes the condensation of ATP and 5-phosphoribose 1-diphosphate to form N'-(5'-phosphoribosyl)-ATP (PR-ATP). Has a crucial role in the pathway because the rate of histidine biosynthesis seems to be controlled primarily by regulation of HisG enzymatic activity.</text>
</comment>
<comment type="catalytic activity">
    <reaction evidence="1">
        <text>1-(5-phospho-beta-D-ribosyl)-ATP + diphosphate = 5-phospho-alpha-D-ribose 1-diphosphate + ATP</text>
        <dbReference type="Rhea" id="RHEA:18473"/>
        <dbReference type="ChEBI" id="CHEBI:30616"/>
        <dbReference type="ChEBI" id="CHEBI:33019"/>
        <dbReference type="ChEBI" id="CHEBI:58017"/>
        <dbReference type="ChEBI" id="CHEBI:73183"/>
        <dbReference type="EC" id="2.4.2.17"/>
    </reaction>
</comment>
<comment type="cofactor">
    <cofactor evidence="1">
        <name>Mg(2+)</name>
        <dbReference type="ChEBI" id="CHEBI:18420"/>
    </cofactor>
</comment>
<comment type="activity regulation">
    <text evidence="1">Feedback inhibited by histidine.</text>
</comment>
<comment type="pathway">
    <text evidence="1">Amino-acid biosynthesis; L-histidine biosynthesis; L-histidine from 5-phospho-alpha-D-ribose 1-diphosphate: step 1/9.</text>
</comment>
<comment type="subcellular location">
    <subcellularLocation>
        <location evidence="1">Cytoplasm</location>
    </subcellularLocation>
</comment>
<comment type="similarity">
    <text evidence="1">Belongs to the ATP phosphoribosyltransferase family. Long subfamily.</text>
</comment>
<proteinExistence type="inferred from homology"/>
<protein>
    <recommendedName>
        <fullName evidence="1">ATP phosphoribosyltransferase</fullName>
        <shortName evidence="1">ATP-PRT</shortName>
        <shortName evidence="1">ATP-PRTase</shortName>
        <ecNumber evidence="1">2.4.2.17</ecNumber>
    </recommendedName>
</protein>
<gene>
    <name evidence="1" type="primary">hisG</name>
    <name type="ordered locus">blr7525</name>
</gene>
<name>HIS1_BRADU</name>
<dbReference type="EC" id="2.4.2.17" evidence="1"/>
<dbReference type="EMBL" id="BA000040">
    <property type="protein sequence ID" value="BAC52790.1"/>
    <property type="molecule type" value="Genomic_DNA"/>
</dbReference>
<dbReference type="RefSeq" id="NP_774165.1">
    <property type="nucleotide sequence ID" value="NC_004463.1"/>
</dbReference>
<dbReference type="RefSeq" id="WP_011090257.1">
    <property type="nucleotide sequence ID" value="NC_004463.1"/>
</dbReference>
<dbReference type="SMR" id="Q89DB4"/>
<dbReference type="FunCoup" id="Q89DB4">
    <property type="interactions" value="580"/>
</dbReference>
<dbReference type="STRING" id="224911.AAV28_35300"/>
<dbReference type="EnsemblBacteria" id="BAC52790">
    <property type="protein sequence ID" value="BAC52790"/>
    <property type="gene ID" value="BAC52790"/>
</dbReference>
<dbReference type="GeneID" id="46494478"/>
<dbReference type="KEGG" id="bja:blr7525"/>
<dbReference type="PATRIC" id="fig|224911.44.peg.7628"/>
<dbReference type="eggNOG" id="COG0040">
    <property type="taxonomic scope" value="Bacteria"/>
</dbReference>
<dbReference type="HOGENOM" id="CLU_038115_0_1_5"/>
<dbReference type="InParanoid" id="Q89DB4"/>
<dbReference type="OrthoDB" id="9806435at2"/>
<dbReference type="PhylomeDB" id="Q89DB4"/>
<dbReference type="UniPathway" id="UPA00031">
    <property type="reaction ID" value="UER00006"/>
</dbReference>
<dbReference type="Proteomes" id="UP000002526">
    <property type="component" value="Chromosome"/>
</dbReference>
<dbReference type="GO" id="GO:0005737">
    <property type="term" value="C:cytoplasm"/>
    <property type="evidence" value="ECO:0007669"/>
    <property type="project" value="UniProtKB-SubCell"/>
</dbReference>
<dbReference type="GO" id="GO:0005524">
    <property type="term" value="F:ATP binding"/>
    <property type="evidence" value="ECO:0007669"/>
    <property type="project" value="UniProtKB-KW"/>
</dbReference>
<dbReference type="GO" id="GO:0003879">
    <property type="term" value="F:ATP phosphoribosyltransferase activity"/>
    <property type="evidence" value="ECO:0000318"/>
    <property type="project" value="GO_Central"/>
</dbReference>
<dbReference type="GO" id="GO:0000287">
    <property type="term" value="F:magnesium ion binding"/>
    <property type="evidence" value="ECO:0007669"/>
    <property type="project" value="UniProtKB-UniRule"/>
</dbReference>
<dbReference type="GO" id="GO:0000105">
    <property type="term" value="P:L-histidine biosynthetic process"/>
    <property type="evidence" value="ECO:0000318"/>
    <property type="project" value="GO_Central"/>
</dbReference>
<dbReference type="CDD" id="cd13593">
    <property type="entry name" value="PBP2_HisGL3"/>
    <property type="match status" value="1"/>
</dbReference>
<dbReference type="Gene3D" id="3.40.190.10">
    <property type="entry name" value="Periplasmic binding protein-like II"/>
    <property type="match status" value="2"/>
</dbReference>
<dbReference type="HAMAP" id="MF_00079">
    <property type="entry name" value="HisG_Long"/>
    <property type="match status" value="1"/>
</dbReference>
<dbReference type="InterPro" id="IPR020621">
    <property type="entry name" value="ATP-PRT_HisG_long"/>
</dbReference>
<dbReference type="InterPro" id="IPR013820">
    <property type="entry name" value="ATP_PRibTrfase_cat"/>
</dbReference>
<dbReference type="InterPro" id="IPR018198">
    <property type="entry name" value="ATP_PRibTrfase_CS"/>
</dbReference>
<dbReference type="InterPro" id="IPR001348">
    <property type="entry name" value="ATP_PRibTrfase_HisG"/>
</dbReference>
<dbReference type="NCBIfam" id="TIGR00070">
    <property type="entry name" value="hisG"/>
    <property type="match status" value="1"/>
</dbReference>
<dbReference type="PANTHER" id="PTHR21403:SF8">
    <property type="entry name" value="ATP PHOSPHORIBOSYLTRANSFERASE"/>
    <property type="match status" value="1"/>
</dbReference>
<dbReference type="PANTHER" id="PTHR21403">
    <property type="entry name" value="ATP PHOSPHORIBOSYLTRANSFERASE ATP-PRTASE"/>
    <property type="match status" value="1"/>
</dbReference>
<dbReference type="Pfam" id="PF01634">
    <property type="entry name" value="HisG"/>
    <property type="match status" value="1"/>
</dbReference>
<dbReference type="SUPFAM" id="SSF53850">
    <property type="entry name" value="Periplasmic binding protein-like II"/>
    <property type="match status" value="1"/>
</dbReference>
<dbReference type="PROSITE" id="PS01316">
    <property type="entry name" value="ATP_P_PHORIBOSYLTR"/>
    <property type="match status" value="1"/>
</dbReference>
<evidence type="ECO:0000255" key="1">
    <source>
        <dbReference type="HAMAP-Rule" id="MF_00079"/>
    </source>
</evidence>
<keyword id="KW-0028">Amino-acid biosynthesis</keyword>
<keyword id="KW-0067">ATP-binding</keyword>
<keyword id="KW-0963">Cytoplasm</keyword>
<keyword id="KW-0328">Glycosyltransferase</keyword>
<keyword id="KW-0368">Histidine biosynthesis</keyword>
<keyword id="KW-0460">Magnesium</keyword>
<keyword id="KW-0479">Metal-binding</keyword>
<keyword id="KW-0547">Nucleotide-binding</keyword>
<keyword id="KW-1185">Reference proteome</keyword>
<keyword id="KW-0808">Transferase</keyword>
<feature type="chain" id="PRO_0000151832" description="ATP phosphoribosyltransferase">
    <location>
        <begin position="1"/>
        <end position="325"/>
    </location>
</feature>
<sequence>MSAPFVLAVPSKGRLQENTEAFFARAGLKLSKAGGARDYRGTIAGLDNVEVAYLSASEIAAQLSRGLAHLGVTGEDLVRENIADADKRVSLIEGLGFGYADVVVAVPQAWIDVRTMADLDDVTTGFREQHHMRMRVATKFVNLTRAFFQNHGITDYRIVESAGATEGAPAAGSAELIVDITTTGATLAANGLRVLDDGMILRSQANLVASRDADWSPQARETARVILDHIAARARANKYREVRTRFRQCDAALLGEAHSRFGVEAPFGGPTSSGMLTLHCPPGQLYALASFLREHGAETVSVVSLDYVFDRENPLFAKLEAFLRR</sequence>
<accession>Q89DB4</accession>